<dbReference type="EMBL" id="BC135963">
    <property type="protein sequence ID" value="AAI35964.1"/>
    <property type="molecule type" value="mRNA"/>
</dbReference>
<dbReference type="RefSeq" id="NP_001096167.1">
    <property type="nucleotide sequence ID" value="NM_001102697.1"/>
</dbReference>
<dbReference type="SMR" id="A4IIC5"/>
<dbReference type="FunCoup" id="A4IIC5">
    <property type="interactions" value="358"/>
</dbReference>
<dbReference type="STRING" id="8364.ENSXETP00000004307"/>
<dbReference type="PaxDb" id="8364-ENSXETP00000008023"/>
<dbReference type="DNASU" id="100124712"/>
<dbReference type="GeneID" id="100124712"/>
<dbReference type="KEGG" id="xtr:100124712"/>
<dbReference type="CTD" id="29985"/>
<dbReference type="eggNOG" id="KOG1558">
    <property type="taxonomic scope" value="Eukaryota"/>
</dbReference>
<dbReference type="InParanoid" id="A4IIC5"/>
<dbReference type="OrthoDB" id="448280at2759"/>
<dbReference type="Proteomes" id="UP000008143">
    <property type="component" value="Chromosome 1"/>
</dbReference>
<dbReference type="GO" id="GO:0016324">
    <property type="term" value="C:apical plasma membrane"/>
    <property type="evidence" value="ECO:0007669"/>
    <property type="project" value="UniProtKB-SubCell"/>
</dbReference>
<dbReference type="GO" id="GO:0005886">
    <property type="term" value="C:plasma membrane"/>
    <property type="evidence" value="ECO:0000250"/>
    <property type="project" value="UniProtKB"/>
</dbReference>
<dbReference type="GO" id="GO:0005385">
    <property type="term" value="F:zinc ion transmembrane transporter activity"/>
    <property type="evidence" value="ECO:0000250"/>
    <property type="project" value="UniProtKB"/>
</dbReference>
<dbReference type="GO" id="GO:0071577">
    <property type="term" value="P:zinc ion transmembrane transport"/>
    <property type="evidence" value="ECO:0000250"/>
    <property type="project" value="UniProtKB"/>
</dbReference>
<dbReference type="InterPro" id="IPR003689">
    <property type="entry name" value="ZIP"/>
</dbReference>
<dbReference type="PANTHER" id="PTHR11040:SF221">
    <property type="entry name" value="ZINC TRANSPORTER ZIP3"/>
    <property type="match status" value="1"/>
</dbReference>
<dbReference type="PANTHER" id="PTHR11040">
    <property type="entry name" value="ZINC/IRON TRANSPORTER"/>
    <property type="match status" value="1"/>
</dbReference>
<dbReference type="Pfam" id="PF02535">
    <property type="entry name" value="Zip"/>
    <property type="match status" value="1"/>
</dbReference>
<proteinExistence type="evidence at transcript level"/>
<reference key="1">
    <citation type="submission" date="2007-03" db="EMBL/GenBank/DDBJ databases">
        <authorList>
            <consortium name="NIH - Xenopus Gene Collection (XGC) project"/>
        </authorList>
    </citation>
    <scope>NUCLEOTIDE SEQUENCE [LARGE SCALE MRNA]</scope>
    <source>
        <tissue>Brain</tissue>
    </source>
</reference>
<feature type="chain" id="PRO_0000312871" description="Zinc transporter ZIP3">
    <location>
        <begin position="1"/>
        <end position="314"/>
    </location>
</feature>
<feature type="topological domain" description="Extracellular" evidence="2">
    <location>
        <begin position="1"/>
        <end position="3"/>
    </location>
</feature>
<feature type="transmembrane region" description="Helical" evidence="2">
    <location>
        <begin position="4"/>
        <end position="24"/>
    </location>
</feature>
<feature type="topological domain" description="Cytoplasmic" evidence="2">
    <location>
        <begin position="25"/>
        <end position="41"/>
    </location>
</feature>
<feature type="transmembrane region" description="Helical" evidence="2">
    <location>
        <begin position="42"/>
        <end position="62"/>
    </location>
</feature>
<feature type="topological domain" description="Extracellular" evidence="2">
    <location>
        <begin position="63"/>
        <end position="84"/>
    </location>
</feature>
<feature type="transmembrane region" description="Helical" evidence="2">
    <location>
        <begin position="85"/>
        <end position="105"/>
    </location>
</feature>
<feature type="topological domain" description="Cytoplasmic" evidence="2">
    <location>
        <begin position="106"/>
        <end position="169"/>
    </location>
</feature>
<feature type="transmembrane region" description="Helical" evidence="2">
    <location>
        <begin position="170"/>
        <end position="190"/>
    </location>
</feature>
<feature type="topological domain" description="Extracellular" evidence="2">
    <location>
        <begin position="191"/>
        <end position="196"/>
    </location>
</feature>
<feature type="transmembrane region" description="Helical" evidence="2">
    <location>
        <begin position="197"/>
        <end position="217"/>
    </location>
</feature>
<feature type="topological domain" description="Cytoplasmic" evidence="2">
    <location>
        <begin position="218"/>
        <end position="229"/>
    </location>
</feature>
<feature type="transmembrane region" description="Helical" evidence="2">
    <location>
        <begin position="230"/>
        <end position="250"/>
    </location>
</feature>
<feature type="topological domain" description="Extracellular" evidence="2">
    <location>
        <begin position="251"/>
        <end position="262"/>
    </location>
</feature>
<feature type="transmembrane region" description="Helical" evidence="2">
    <location>
        <begin position="263"/>
        <end position="283"/>
    </location>
</feature>
<feature type="topological domain" description="Cytoplasmic" evidence="2">
    <location>
        <begin position="284"/>
        <end position="292"/>
    </location>
</feature>
<feature type="transmembrane region" description="Helical" evidence="2">
    <location>
        <begin position="293"/>
        <end position="313"/>
    </location>
</feature>
<feature type="topological domain" description="Extracellular" evidence="2">
    <location>
        <position position="314"/>
    </location>
</feature>
<comment type="function">
    <text evidence="1">Transporter for the divalent cation Zn(2+). Mediates the influx of Zn(2+) into cells from extracellular space.</text>
</comment>
<comment type="catalytic activity">
    <reaction evidence="1">
        <text>Zn(2+)(in) = Zn(2+)(out)</text>
        <dbReference type="Rhea" id="RHEA:29351"/>
        <dbReference type="ChEBI" id="CHEBI:29105"/>
    </reaction>
    <physiologicalReaction direction="left-to-right" evidence="1">
        <dbReference type="Rhea" id="RHEA:29352"/>
    </physiologicalReaction>
</comment>
<comment type="subcellular location">
    <subcellularLocation>
        <location evidence="1">Cell membrane</location>
        <topology evidence="2">Multi-pass membrane protein</topology>
    </subcellularLocation>
    <subcellularLocation>
        <location evidence="1">Apical cell membrane</location>
        <topology evidence="2">Multi-pass membrane protein</topology>
    </subcellularLocation>
</comment>
<comment type="similarity">
    <text evidence="3">Belongs to the ZIP transporter (TC 2.A.5) family.</text>
</comment>
<sequence length="314" mass="34231">MNLIFAKVLCLLAILVLMMLGSLIPVKISEADFDKSSRSRKILSLSNSFAGGVFLATCFNALLPAVREKFFDLLKIGNISTDYPLAETIMMVGFFLTVFVEQTVMTFRKEKPSFIDMETFNAGSDIGSDSEFESPFISANHGHNLYEGGHSHHSHSLNIKELSSSSPIRLFSLVFALSAHSVFEGLALGLQEDGNKLLSLFIGVVIHETLVAMALGVSMAKVNTHLKDAIKMAVLVSTMIPIGIVVGMAIQSAQNMASSIASALLQGIAGGTFIFVTFFEILVKELEEKNDRLLKVLFLVLGYTVLAVLVLFKW</sequence>
<organism>
    <name type="scientific">Xenopus tropicalis</name>
    <name type="common">Western clawed frog</name>
    <name type="synonym">Silurana tropicalis</name>
    <dbReference type="NCBI Taxonomy" id="8364"/>
    <lineage>
        <taxon>Eukaryota</taxon>
        <taxon>Metazoa</taxon>
        <taxon>Chordata</taxon>
        <taxon>Craniata</taxon>
        <taxon>Vertebrata</taxon>
        <taxon>Euteleostomi</taxon>
        <taxon>Amphibia</taxon>
        <taxon>Batrachia</taxon>
        <taxon>Anura</taxon>
        <taxon>Pipoidea</taxon>
        <taxon>Pipidae</taxon>
        <taxon>Xenopodinae</taxon>
        <taxon>Xenopus</taxon>
        <taxon>Silurana</taxon>
    </lineage>
</organism>
<keyword id="KW-1003">Cell membrane</keyword>
<keyword id="KW-0406">Ion transport</keyword>
<keyword id="KW-0472">Membrane</keyword>
<keyword id="KW-1185">Reference proteome</keyword>
<keyword id="KW-0812">Transmembrane</keyword>
<keyword id="KW-1133">Transmembrane helix</keyword>
<keyword id="KW-0813">Transport</keyword>
<keyword id="KW-0862">Zinc</keyword>
<keyword id="KW-0864">Zinc transport</keyword>
<name>S39A3_XENTR</name>
<gene>
    <name type="primary">slc39a3</name>
    <name type="synonym">zip3</name>
</gene>
<protein>
    <recommendedName>
        <fullName>Zinc transporter ZIP3</fullName>
    </recommendedName>
    <alternativeName>
        <fullName>Solute carrier family 39 member 3</fullName>
    </alternativeName>
    <alternativeName>
        <fullName>Zrt- and Irt-like protein 3</fullName>
        <shortName>ZIP-3</shortName>
    </alternativeName>
</protein>
<accession>A4IIC5</accession>
<evidence type="ECO:0000250" key="1">
    <source>
        <dbReference type="UniProtKB" id="Q99K24"/>
    </source>
</evidence>
<evidence type="ECO:0000255" key="2"/>
<evidence type="ECO:0000305" key="3"/>